<gene>
    <name type="ordered locus">YPO1399</name>
    <name type="ordered locus">y2773.1</name>
    <name type="ordered locus">YP_1194</name>
</gene>
<proteinExistence type="inferred from homology"/>
<sequence>MDHRLLEIVACPVCNGKLYFNKENLELVCKVDNLAYPVRDGIPVLLENEARPLSIDEKHA</sequence>
<dbReference type="EMBL" id="AL590842">
    <property type="protein sequence ID" value="CAL20051.1"/>
    <property type="molecule type" value="Genomic_DNA"/>
</dbReference>
<dbReference type="EMBL" id="AE009952">
    <property type="status" value="NOT_ANNOTATED_CDS"/>
    <property type="molecule type" value="Genomic_DNA"/>
</dbReference>
<dbReference type="EMBL" id="AE017042">
    <property type="protein sequence ID" value="AAS61437.1"/>
    <property type="status" value="ALT_INIT"/>
    <property type="molecule type" value="Genomic_DNA"/>
</dbReference>
<dbReference type="PIR" id="AI0170">
    <property type="entry name" value="AI0170"/>
</dbReference>
<dbReference type="RefSeq" id="WP_002211315.1">
    <property type="nucleotide sequence ID" value="NZ_WUCM01000045.1"/>
</dbReference>
<dbReference type="RefSeq" id="YP_002346422.1">
    <property type="nucleotide sequence ID" value="NC_003143.1"/>
</dbReference>
<dbReference type="SMR" id="Q74VT6"/>
<dbReference type="STRING" id="214092.YPO1399"/>
<dbReference type="PaxDb" id="214092-YPO1399"/>
<dbReference type="EnsemblBacteria" id="AAS61437">
    <property type="protein sequence ID" value="AAS61437"/>
    <property type="gene ID" value="YP_1194"/>
</dbReference>
<dbReference type="KEGG" id="ype:YPO1399"/>
<dbReference type="KEGG" id="ypm:YP_1194"/>
<dbReference type="PATRIC" id="fig|214092.21.peg.1723"/>
<dbReference type="eggNOG" id="COG2835">
    <property type="taxonomic scope" value="Bacteria"/>
</dbReference>
<dbReference type="HOGENOM" id="CLU_155659_3_1_6"/>
<dbReference type="OMA" id="ELICHAD"/>
<dbReference type="OrthoDB" id="9812205at2"/>
<dbReference type="Proteomes" id="UP000000815">
    <property type="component" value="Chromosome"/>
</dbReference>
<dbReference type="Proteomes" id="UP000001019">
    <property type="component" value="Chromosome"/>
</dbReference>
<dbReference type="Proteomes" id="UP000002490">
    <property type="component" value="Chromosome"/>
</dbReference>
<dbReference type="GO" id="GO:0005829">
    <property type="term" value="C:cytosol"/>
    <property type="evidence" value="ECO:0000318"/>
    <property type="project" value="GO_Central"/>
</dbReference>
<dbReference type="FunFam" id="2.20.25.10:FF:000002">
    <property type="entry name" value="UPF0434 protein YcaR"/>
    <property type="match status" value="1"/>
</dbReference>
<dbReference type="Gene3D" id="2.20.25.10">
    <property type="match status" value="1"/>
</dbReference>
<dbReference type="HAMAP" id="MF_01187">
    <property type="entry name" value="UPF0434"/>
    <property type="match status" value="1"/>
</dbReference>
<dbReference type="InterPro" id="IPR005651">
    <property type="entry name" value="Trm112-like"/>
</dbReference>
<dbReference type="PANTHER" id="PTHR33505:SF4">
    <property type="entry name" value="PROTEIN PREY, MITOCHONDRIAL"/>
    <property type="match status" value="1"/>
</dbReference>
<dbReference type="PANTHER" id="PTHR33505">
    <property type="entry name" value="ZGC:162634"/>
    <property type="match status" value="1"/>
</dbReference>
<dbReference type="Pfam" id="PF03966">
    <property type="entry name" value="Trm112p"/>
    <property type="match status" value="1"/>
</dbReference>
<dbReference type="SUPFAM" id="SSF158997">
    <property type="entry name" value="Trm112p-like"/>
    <property type="match status" value="1"/>
</dbReference>
<evidence type="ECO:0000255" key="1">
    <source>
        <dbReference type="HAMAP-Rule" id="MF_01187"/>
    </source>
</evidence>
<evidence type="ECO:0000305" key="2"/>
<feature type="chain" id="PRO_0000291186" description="UPF0434 protein YPO1399/y2773.1/YP_1194">
    <location>
        <begin position="1"/>
        <end position="60"/>
    </location>
</feature>
<name>Y1399_YERPE</name>
<protein>
    <recommendedName>
        <fullName evidence="1">UPF0434 protein YPO1399/y2773.1/YP_1194</fullName>
    </recommendedName>
</protein>
<organism>
    <name type="scientific">Yersinia pestis</name>
    <dbReference type="NCBI Taxonomy" id="632"/>
    <lineage>
        <taxon>Bacteria</taxon>
        <taxon>Pseudomonadati</taxon>
        <taxon>Pseudomonadota</taxon>
        <taxon>Gammaproteobacteria</taxon>
        <taxon>Enterobacterales</taxon>
        <taxon>Yersiniaceae</taxon>
        <taxon>Yersinia</taxon>
    </lineage>
</organism>
<keyword id="KW-1185">Reference proteome</keyword>
<accession>Q74VT6</accession>
<accession>Q0WH16</accession>
<reference key="1">
    <citation type="journal article" date="2001" name="Nature">
        <title>Genome sequence of Yersinia pestis, the causative agent of plague.</title>
        <authorList>
            <person name="Parkhill J."/>
            <person name="Wren B.W."/>
            <person name="Thomson N.R."/>
            <person name="Titball R.W."/>
            <person name="Holden M.T.G."/>
            <person name="Prentice M.B."/>
            <person name="Sebaihia M."/>
            <person name="James K.D."/>
            <person name="Churcher C.M."/>
            <person name="Mungall K.L."/>
            <person name="Baker S."/>
            <person name="Basham D."/>
            <person name="Bentley S.D."/>
            <person name="Brooks K."/>
            <person name="Cerdeno-Tarraga A.-M."/>
            <person name="Chillingworth T."/>
            <person name="Cronin A."/>
            <person name="Davies R.M."/>
            <person name="Davis P."/>
            <person name="Dougan G."/>
            <person name="Feltwell T."/>
            <person name="Hamlin N."/>
            <person name="Holroyd S."/>
            <person name="Jagels K."/>
            <person name="Karlyshev A.V."/>
            <person name="Leather S."/>
            <person name="Moule S."/>
            <person name="Oyston P.C.F."/>
            <person name="Quail M.A."/>
            <person name="Rutherford K.M."/>
            <person name="Simmonds M."/>
            <person name="Skelton J."/>
            <person name="Stevens K."/>
            <person name="Whitehead S."/>
            <person name="Barrell B.G."/>
        </authorList>
    </citation>
    <scope>NUCLEOTIDE SEQUENCE [LARGE SCALE GENOMIC DNA]</scope>
    <source>
        <strain>CO-92 / Biovar Orientalis</strain>
    </source>
</reference>
<reference key="2">
    <citation type="journal article" date="2002" name="J. Bacteriol.">
        <title>Genome sequence of Yersinia pestis KIM.</title>
        <authorList>
            <person name="Deng W."/>
            <person name="Burland V."/>
            <person name="Plunkett G. III"/>
            <person name="Boutin A."/>
            <person name="Mayhew G.F."/>
            <person name="Liss P."/>
            <person name="Perna N.T."/>
            <person name="Rose D.J."/>
            <person name="Mau B."/>
            <person name="Zhou S."/>
            <person name="Schwartz D.C."/>
            <person name="Fetherston J.D."/>
            <person name="Lindler L.E."/>
            <person name="Brubaker R.R."/>
            <person name="Plano G.V."/>
            <person name="Straley S.C."/>
            <person name="McDonough K.A."/>
            <person name="Nilles M.L."/>
            <person name="Matson J.S."/>
            <person name="Blattner F.R."/>
            <person name="Perry R.D."/>
        </authorList>
    </citation>
    <scope>NUCLEOTIDE SEQUENCE [LARGE SCALE GENOMIC DNA]</scope>
    <source>
        <strain>KIM10+ / Biovar Mediaevalis</strain>
    </source>
</reference>
<reference key="3">
    <citation type="journal article" date="2004" name="DNA Res.">
        <title>Complete genome sequence of Yersinia pestis strain 91001, an isolate avirulent to humans.</title>
        <authorList>
            <person name="Song Y."/>
            <person name="Tong Z."/>
            <person name="Wang J."/>
            <person name="Wang L."/>
            <person name="Guo Z."/>
            <person name="Han Y."/>
            <person name="Zhang J."/>
            <person name="Pei D."/>
            <person name="Zhou D."/>
            <person name="Qin H."/>
            <person name="Pang X."/>
            <person name="Han Y."/>
            <person name="Zhai J."/>
            <person name="Li M."/>
            <person name="Cui B."/>
            <person name="Qi Z."/>
            <person name="Jin L."/>
            <person name="Dai R."/>
            <person name="Chen F."/>
            <person name="Li S."/>
            <person name="Ye C."/>
            <person name="Du Z."/>
            <person name="Lin W."/>
            <person name="Wang J."/>
            <person name="Yu J."/>
            <person name="Yang H."/>
            <person name="Wang J."/>
            <person name="Huang P."/>
            <person name="Yang R."/>
        </authorList>
    </citation>
    <scope>NUCLEOTIDE SEQUENCE [LARGE SCALE GENOMIC DNA]</scope>
    <source>
        <strain>91001 / Biovar Mediaevalis</strain>
    </source>
</reference>
<comment type="similarity">
    <text evidence="1">Belongs to the UPF0434 family.</text>
</comment>
<comment type="sequence caution" evidence="2">
    <conflict type="erroneous initiation">
        <sequence resource="EMBL-CDS" id="AAS61437"/>
    </conflict>
</comment>